<sequence length="201" mass="22321">MALHDENVVWHSHPVTVQQRELHHGHRGVVLWFTGLSGSGKSTVAGALEEALHKLGVSTYLLDGDNVRHGLCSDLGFSDADRKENIRRVGEVANLMVEAGLVVLTAFISPHRAERQMVRERVGEGRFIEVFVDTPLAICEARDPKGLYKKARAGELRNFTGIDSVYEAPESAEIHLNGEQLVTNLVQQLLDLLRQNDIIRS</sequence>
<dbReference type="EC" id="2.7.1.25" evidence="1"/>
<dbReference type="EMBL" id="CP000800">
    <property type="protein sequence ID" value="ABV17248.1"/>
    <property type="molecule type" value="Genomic_DNA"/>
</dbReference>
<dbReference type="RefSeq" id="WP_001173673.1">
    <property type="nucleotide sequence ID" value="NC_009801.1"/>
</dbReference>
<dbReference type="SMR" id="A7ZQJ4"/>
<dbReference type="GeneID" id="93779256"/>
<dbReference type="KEGG" id="ecw:EcE24377A_3051"/>
<dbReference type="HOGENOM" id="CLU_046932_1_0_6"/>
<dbReference type="UniPathway" id="UPA00140">
    <property type="reaction ID" value="UER00205"/>
</dbReference>
<dbReference type="Proteomes" id="UP000001122">
    <property type="component" value="Chromosome"/>
</dbReference>
<dbReference type="GO" id="GO:0004020">
    <property type="term" value="F:adenylylsulfate kinase activity"/>
    <property type="evidence" value="ECO:0007669"/>
    <property type="project" value="UniProtKB-UniRule"/>
</dbReference>
<dbReference type="GO" id="GO:0005524">
    <property type="term" value="F:ATP binding"/>
    <property type="evidence" value="ECO:0007669"/>
    <property type="project" value="UniProtKB-UniRule"/>
</dbReference>
<dbReference type="GO" id="GO:0070814">
    <property type="term" value="P:hydrogen sulfide biosynthetic process"/>
    <property type="evidence" value="ECO:0007669"/>
    <property type="project" value="UniProtKB-UniRule"/>
</dbReference>
<dbReference type="GO" id="GO:0000103">
    <property type="term" value="P:sulfate assimilation"/>
    <property type="evidence" value="ECO:0007669"/>
    <property type="project" value="UniProtKB-UniRule"/>
</dbReference>
<dbReference type="CDD" id="cd02027">
    <property type="entry name" value="APSK"/>
    <property type="match status" value="1"/>
</dbReference>
<dbReference type="FunFam" id="3.40.50.300:FF:000212">
    <property type="entry name" value="Adenylyl-sulfate kinase"/>
    <property type="match status" value="1"/>
</dbReference>
<dbReference type="Gene3D" id="3.40.50.300">
    <property type="entry name" value="P-loop containing nucleotide triphosphate hydrolases"/>
    <property type="match status" value="1"/>
</dbReference>
<dbReference type="HAMAP" id="MF_00065">
    <property type="entry name" value="Adenylyl_sulf_kinase"/>
    <property type="match status" value="1"/>
</dbReference>
<dbReference type="InterPro" id="IPR002891">
    <property type="entry name" value="APS_kinase"/>
</dbReference>
<dbReference type="InterPro" id="IPR027417">
    <property type="entry name" value="P-loop_NTPase"/>
</dbReference>
<dbReference type="NCBIfam" id="TIGR00455">
    <property type="entry name" value="apsK"/>
    <property type="match status" value="1"/>
</dbReference>
<dbReference type="NCBIfam" id="NF003013">
    <property type="entry name" value="PRK03846.1"/>
    <property type="match status" value="1"/>
</dbReference>
<dbReference type="PANTHER" id="PTHR11055:SF63">
    <property type="entry name" value="ADENYLYL-SULFATE KINASE 1, CHLOROPLASTIC"/>
    <property type="match status" value="1"/>
</dbReference>
<dbReference type="PANTHER" id="PTHR11055">
    <property type="entry name" value="BIFUNCTIONAL 3'-PHOSPHOADENOSINE 5'-PHOSPHOSULFATE SYNTHASE"/>
    <property type="match status" value="1"/>
</dbReference>
<dbReference type="Pfam" id="PF01583">
    <property type="entry name" value="APS_kinase"/>
    <property type="match status" value="1"/>
</dbReference>
<dbReference type="SUPFAM" id="SSF52540">
    <property type="entry name" value="P-loop containing nucleoside triphosphate hydrolases"/>
    <property type="match status" value="1"/>
</dbReference>
<evidence type="ECO:0000255" key="1">
    <source>
        <dbReference type="HAMAP-Rule" id="MF_00065"/>
    </source>
</evidence>
<name>CYSC_ECO24</name>
<gene>
    <name evidence="1" type="primary">cysC</name>
    <name type="ordered locus">EcE24377A_3051</name>
</gene>
<feature type="chain" id="PRO_1000057442" description="Adenylyl-sulfate kinase">
    <location>
        <begin position="1"/>
        <end position="201"/>
    </location>
</feature>
<feature type="active site" description="Phosphoserine intermediate" evidence="1">
    <location>
        <position position="109"/>
    </location>
</feature>
<feature type="binding site" evidence="1">
    <location>
        <begin position="35"/>
        <end position="42"/>
    </location>
    <ligand>
        <name>ATP</name>
        <dbReference type="ChEBI" id="CHEBI:30616"/>
    </ligand>
</feature>
<accession>A7ZQJ4</accession>
<proteinExistence type="inferred from homology"/>
<keyword id="KW-0067">ATP-binding</keyword>
<keyword id="KW-0418">Kinase</keyword>
<keyword id="KW-0547">Nucleotide-binding</keyword>
<keyword id="KW-0597">Phosphoprotein</keyword>
<keyword id="KW-1185">Reference proteome</keyword>
<keyword id="KW-0808">Transferase</keyword>
<protein>
    <recommendedName>
        <fullName evidence="1">Adenylyl-sulfate kinase</fullName>
        <ecNumber evidence="1">2.7.1.25</ecNumber>
    </recommendedName>
    <alternativeName>
        <fullName evidence="1">APS kinase</fullName>
    </alternativeName>
    <alternativeName>
        <fullName evidence="1">ATP adenosine-5'-phosphosulfate 3'-phosphotransferase</fullName>
    </alternativeName>
    <alternativeName>
        <fullName evidence="1">Adenosine-5'-phosphosulfate kinase</fullName>
    </alternativeName>
</protein>
<organism>
    <name type="scientific">Escherichia coli O139:H28 (strain E24377A / ETEC)</name>
    <dbReference type="NCBI Taxonomy" id="331111"/>
    <lineage>
        <taxon>Bacteria</taxon>
        <taxon>Pseudomonadati</taxon>
        <taxon>Pseudomonadota</taxon>
        <taxon>Gammaproteobacteria</taxon>
        <taxon>Enterobacterales</taxon>
        <taxon>Enterobacteriaceae</taxon>
        <taxon>Escherichia</taxon>
    </lineage>
</organism>
<comment type="function">
    <text evidence="1">Catalyzes the synthesis of activated sulfate.</text>
</comment>
<comment type="catalytic activity">
    <reaction evidence="1">
        <text>adenosine 5'-phosphosulfate + ATP = 3'-phosphoadenylyl sulfate + ADP + H(+)</text>
        <dbReference type="Rhea" id="RHEA:24152"/>
        <dbReference type="ChEBI" id="CHEBI:15378"/>
        <dbReference type="ChEBI" id="CHEBI:30616"/>
        <dbReference type="ChEBI" id="CHEBI:58243"/>
        <dbReference type="ChEBI" id="CHEBI:58339"/>
        <dbReference type="ChEBI" id="CHEBI:456216"/>
        <dbReference type="EC" id="2.7.1.25"/>
    </reaction>
</comment>
<comment type="pathway">
    <text evidence="1">Sulfur metabolism; hydrogen sulfide biosynthesis; sulfite from sulfate: step 2/3.</text>
</comment>
<comment type="similarity">
    <text evidence="1">Belongs to the APS kinase family.</text>
</comment>
<reference key="1">
    <citation type="journal article" date="2008" name="J. Bacteriol.">
        <title>The pangenome structure of Escherichia coli: comparative genomic analysis of E. coli commensal and pathogenic isolates.</title>
        <authorList>
            <person name="Rasko D.A."/>
            <person name="Rosovitz M.J."/>
            <person name="Myers G.S.A."/>
            <person name="Mongodin E.F."/>
            <person name="Fricke W.F."/>
            <person name="Gajer P."/>
            <person name="Crabtree J."/>
            <person name="Sebaihia M."/>
            <person name="Thomson N.R."/>
            <person name="Chaudhuri R."/>
            <person name="Henderson I.R."/>
            <person name="Sperandio V."/>
            <person name="Ravel J."/>
        </authorList>
    </citation>
    <scope>NUCLEOTIDE SEQUENCE [LARGE SCALE GENOMIC DNA]</scope>
    <source>
        <strain>E24377A / ETEC</strain>
    </source>
</reference>